<name>RBBP7_MOUSE</name>
<protein>
    <recommendedName>
        <fullName>Histone-binding protein RBBP7</fullName>
    </recommendedName>
    <alternativeName>
        <fullName>Histone acetyltransferase type B subunit 2</fullName>
    </alternativeName>
    <alternativeName>
        <fullName>Nucleosome-remodeling factor subunit RBAP46</fullName>
    </alternativeName>
    <alternativeName>
        <fullName>Retinoblastoma-binding protein 7</fullName>
        <shortName>RBBP-7</shortName>
    </alternativeName>
    <alternativeName>
        <fullName>Retinoblastoma-binding protein p46</fullName>
    </alternativeName>
</protein>
<sequence>MASKEMFEDTVEERVINEEYKIWKKNTPFLYDLVMTHALQWPSLTVQWLPEVTKPEGKDYALHWLVLGTHTSDEQNHLVVARVHIPNDDAQFDASHCDSDKGEFGGFGSVTGKIECEIKINHEGEVNRARYMPQNPHIIATKTPSSDVLVFDYTKHPAKPDPSGECNPDLRLRGHQKEGYGLSWNSNLSGHLLSASDDHTVCLWDINAGPKEGKIVDAKAIFTGHSAVVEDVAWHLLHESLFGSVADDQKLMIWDTRSNTTSKPSHLVDAHTAEVNCLSFNPYSEFILATGSADKTVALWDLRNLKLKLHTFESHKDEIFQVHWSPHNETILASSGTDRRLNVWDLSKIGEEQSAEDAEDGPPELLFIHGGHTAKISDFSWNPNEPWVICSVSEDNIMQIWQMAENIYNDEESDVTASELEGQGS</sequence>
<dbReference type="EMBL" id="U35142">
    <property type="protein sequence ID" value="AAC52276.1"/>
    <property type="molecule type" value="mRNA"/>
</dbReference>
<dbReference type="EMBL" id="AK076016">
    <property type="protein sequence ID" value="BAC36122.1"/>
    <property type="molecule type" value="mRNA"/>
</dbReference>
<dbReference type="EMBL" id="AK135779">
    <property type="protein sequence ID" value="BAE22658.1"/>
    <property type="molecule type" value="mRNA"/>
</dbReference>
<dbReference type="EMBL" id="AK135956">
    <property type="protein sequence ID" value="BAE22743.1"/>
    <property type="molecule type" value="mRNA"/>
</dbReference>
<dbReference type="EMBL" id="AK136110">
    <property type="protein sequence ID" value="BAE22826.1"/>
    <property type="molecule type" value="mRNA"/>
</dbReference>
<dbReference type="EMBL" id="AK145531">
    <property type="protein sequence ID" value="BAE26487.1"/>
    <property type="molecule type" value="mRNA"/>
</dbReference>
<dbReference type="EMBL" id="AK145651">
    <property type="protein sequence ID" value="BAE26567.1"/>
    <property type="molecule type" value="mRNA"/>
</dbReference>
<dbReference type="EMBL" id="AK146014">
    <property type="protein sequence ID" value="BAE26833.1"/>
    <property type="molecule type" value="mRNA"/>
</dbReference>
<dbReference type="EMBL" id="AK146904">
    <property type="protein sequence ID" value="BAE27517.1"/>
    <property type="molecule type" value="mRNA"/>
</dbReference>
<dbReference type="EMBL" id="AK146967">
    <property type="protein sequence ID" value="BAE27573.1"/>
    <property type="molecule type" value="mRNA"/>
</dbReference>
<dbReference type="EMBL" id="AK147062">
    <property type="protein sequence ID" value="BAE27646.1"/>
    <property type="molecule type" value="mRNA"/>
</dbReference>
<dbReference type="EMBL" id="AK148852">
    <property type="protein sequence ID" value="BAE28678.1"/>
    <property type="molecule type" value="mRNA"/>
</dbReference>
<dbReference type="EMBL" id="AK153913">
    <property type="protein sequence ID" value="BAE32251.1"/>
    <property type="molecule type" value="mRNA"/>
</dbReference>
<dbReference type="EMBL" id="AK160023">
    <property type="protein sequence ID" value="BAE35566.1"/>
    <property type="molecule type" value="mRNA"/>
</dbReference>
<dbReference type="EMBL" id="AL672123">
    <property type="status" value="NOT_ANNOTATED_CDS"/>
    <property type="molecule type" value="Genomic_DNA"/>
</dbReference>
<dbReference type="EMBL" id="BC003785">
    <property type="protein sequence ID" value="AAH03785.1"/>
    <property type="molecule type" value="mRNA"/>
</dbReference>
<dbReference type="CCDS" id="CCDS30509.1"/>
<dbReference type="PIR" id="I49367">
    <property type="entry name" value="I49367"/>
</dbReference>
<dbReference type="RefSeq" id="NP_033057.3">
    <property type="nucleotide sequence ID" value="NM_009031.3"/>
</dbReference>
<dbReference type="SMR" id="Q60973"/>
<dbReference type="BioGRID" id="232827">
    <property type="interactions" value="47"/>
</dbReference>
<dbReference type="ComplexPortal" id="CPX-3441">
    <property type="entry name" value="SIN3A histone deacetylase complex, ES cell-specific variant"/>
</dbReference>
<dbReference type="ComplexPortal" id="CPX-3443">
    <property type="entry name" value="SIN3A histone deacetylase complex"/>
</dbReference>
<dbReference type="ComplexPortal" id="CPX-3444">
    <property type="entry name" value="SIN3B histone deacetylase complex"/>
</dbReference>
<dbReference type="ComplexPortal" id="CPX-694">
    <property type="entry name" value="NuRF chromatin remodeling complex"/>
</dbReference>
<dbReference type="ComplexPortal" id="CPX-953">
    <property type="entry name" value="MBD2/NuRD nucleosome remodeling and deacetylase complex"/>
</dbReference>
<dbReference type="ComplexPortal" id="CPX-954">
    <property type="entry name" value="MBD3/NuRD nucleosome remodeling and deacetylase complex"/>
</dbReference>
<dbReference type="CORUM" id="Q60973"/>
<dbReference type="DIP" id="DIP-32856N"/>
<dbReference type="FunCoup" id="Q60973">
    <property type="interactions" value="3467"/>
</dbReference>
<dbReference type="IntAct" id="Q60973">
    <property type="interactions" value="12"/>
</dbReference>
<dbReference type="MINT" id="Q60973"/>
<dbReference type="STRING" id="10090.ENSMUSP00000033720"/>
<dbReference type="GlyGen" id="Q60973">
    <property type="glycosylation" value="3 sites, 1 N-linked glycan (1 site), 1 O-linked glycan (2 sites)"/>
</dbReference>
<dbReference type="iPTMnet" id="Q60973"/>
<dbReference type="PhosphoSitePlus" id="Q60973"/>
<dbReference type="SwissPalm" id="Q60973"/>
<dbReference type="REPRODUCTION-2DPAGE" id="Q60973"/>
<dbReference type="jPOST" id="Q60973"/>
<dbReference type="PaxDb" id="10090-ENSMUSP00000033720"/>
<dbReference type="PeptideAtlas" id="Q60973"/>
<dbReference type="ProteomicsDB" id="255117"/>
<dbReference type="Pumba" id="Q60973"/>
<dbReference type="Antibodypedia" id="24054">
    <property type="antibodies" value="395 antibodies from 31 providers"/>
</dbReference>
<dbReference type="DNASU" id="245688"/>
<dbReference type="Ensembl" id="ENSMUST00000033720.12">
    <property type="protein sequence ID" value="ENSMUSP00000033720.6"/>
    <property type="gene ID" value="ENSMUSG00000031353.14"/>
</dbReference>
<dbReference type="GeneID" id="245688"/>
<dbReference type="KEGG" id="mmu:245688"/>
<dbReference type="UCSC" id="uc009uug.2">
    <property type="organism name" value="mouse"/>
</dbReference>
<dbReference type="AGR" id="MGI:1194910"/>
<dbReference type="CTD" id="5931"/>
<dbReference type="MGI" id="MGI:1194910">
    <property type="gene designation" value="Rbbp7"/>
</dbReference>
<dbReference type="VEuPathDB" id="HostDB:ENSMUSG00000031353"/>
<dbReference type="eggNOG" id="KOG0264">
    <property type="taxonomic scope" value="Eukaryota"/>
</dbReference>
<dbReference type="GeneTree" id="ENSGT00940000154748"/>
<dbReference type="InParanoid" id="Q60973"/>
<dbReference type="OMA" id="KIRAMPA"/>
<dbReference type="OrthoDB" id="427795at2759"/>
<dbReference type="PhylomeDB" id="Q60973"/>
<dbReference type="TreeFam" id="TF106485"/>
<dbReference type="Reactome" id="R-MMU-212300">
    <property type="pathway name" value="PRC2 methylates histones and DNA"/>
</dbReference>
<dbReference type="Reactome" id="R-MMU-2559580">
    <property type="pathway name" value="Oxidative Stress Induced Senescence"/>
</dbReference>
<dbReference type="Reactome" id="R-MMU-3214815">
    <property type="pathway name" value="HDACs deacetylate histones"/>
</dbReference>
<dbReference type="Reactome" id="R-MMU-3214841">
    <property type="pathway name" value="PKMTs methylate histone lysines"/>
</dbReference>
<dbReference type="Reactome" id="R-MMU-3214847">
    <property type="pathway name" value="HATs acetylate histones"/>
</dbReference>
<dbReference type="Reactome" id="R-MMU-3214858">
    <property type="pathway name" value="RMTs methylate histone arginines"/>
</dbReference>
<dbReference type="Reactome" id="R-MMU-606279">
    <property type="pathway name" value="Deposition of new CENPA-containing nucleosomes at the centromere"/>
</dbReference>
<dbReference type="Reactome" id="R-MMU-6804758">
    <property type="pathway name" value="Regulation of TP53 Activity through Acetylation"/>
</dbReference>
<dbReference type="Reactome" id="R-MMU-73762">
    <property type="pathway name" value="RNA Polymerase I Transcription Initiation"/>
</dbReference>
<dbReference type="Reactome" id="R-MMU-8943724">
    <property type="pathway name" value="Regulation of PTEN gene transcription"/>
</dbReference>
<dbReference type="Reactome" id="R-MMU-8951664">
    <property type="pathway name" value="Neddylation"/>
</dbReference>
<dbReference type="Reactome" id="R-MMU-8953750">
    <property type="pathway name" value="Transcriptional Regulation by E2F6"/>
</dbReference>
<dbReference type="BioGRID-ORCS" id="245688">
    <property type="hits" value="2 hits in 84 CRISPR screens"/>
</dbReference>
<dbReference type="ChiTaRS" id="Rbbp7">
    <property type="organism name" value="mouse"/>
</dbReference>
<dbReference type="PRO" id="PR:Q60973"/>
<dbReference type="Proteomes" id="UP000000589">
    <property type="component" value="Chromosome X"/>
</dbReference>
<dbReference type="RNAct" id="Q60973">
    <property type="molecule type" value="protein"/>
</dbReference>
<dbReference type="Bgee" id="ENSMUSG00000031353">
    <property type="expression patterns" value="Expressed in primitive streak and 270 other cell types or tissues"/>
</dbReference>
<dbReference type="ExpressionAtlas" id="Q60973">
    <property type="expression patterns" value="baseline and differential"/>
</dbReference>
<dbReference type="GO" id="GO:1904949">
    <property type="term" value="C:ATPase complex"/>
    <property type="evidence" value="ECO:0000266"/>
    <property type="project" value="ComplexPortal"/>
</dbReference>
<dbReference type="GO" id="GO:0000781">
    <property type="term" value="C:chromosome, telomeric region"/>
    <property type="evidence" value="ECO:0007669"/>
    <property type="project" value="Ensembl"/>
</dbReference>
<dbReference type="GO" id="GO:0005829">
    <property type="term" value="C:cytosol"/>
    <property type="evidence" value="ECO:0007669"/>
    <property type="project" value="Ensembl"/>
</dbReference>
<dbReference type="GO" id="GO:0035098">
    <property type="term" value="C:ESC/E(Z) complex"/>
    <property type="evidence" value="ECO:0000314"/>
    <property type="project" value="MGI"/>
</dbReference>
<dbReference type="GO" id="GO:0005654">
    <property type="term" value="C:nucleoplasm"/>
    <property type="evidence" value="ECO:0000304"/>
    <property type="project" value="Reactome"/>
</dbReference>
<dbReference type="GO" id="GO:0005634">
    <property type="term" value="C:nucleus"/>
    <property type="evidence" value="ECO:0000314"/>
    <property type="project" value="MGI"/>
</dbReference>
<dbReference type="GO" id="GO:0016581">
    <property type="term" value="C:NuRD complex"/>
    <property type="evidence" value="ECO:0000314"/>
    <property type="project" value="MGI"/>
</dbReference>
<dbReference type="GO" id="GO:0016589">
    <property type="term" value="C:NURF complex"/>
    <property type="evidence" value="ECO:0000266"/>
    <property type="project" value="ComplexPortal"/>
</dbReference>
<dbReference type="GO" id="GO:0070822">
    <property type="term" value="C:Sin3-type complex"/>
    <property type="evidence" value="ECO:0000303"/>
    <property type="project" value="ComplexPortal"/>
</dbReference>
<dbReference type="GO" id="GO:0042393">
    <property type="term" value="F:histone binding"/>
    <property type="evidence" value="ECO:0007669"/>
    <property type="project" value="Ensembl"/>
</dbReference>
<dbReference type="GO" id="GO:0003723">
    <property type="term" value="F:RNA binding"/>
    <property type="evidence" value="ECO:0000353"/>
    <property type="project" value="MGI"/>
</dbReference>
<dbReference type="GO" id="GO:0007420">
    <property type="term" value="P:brain development"/>
    <property type="evidence" value="ECO:0000303"/>
    <property type="project" value="ComplexPortal"/>
</dbReference>
<dbReference type="GO" id="GO:0070370">
    <property type="term" value="P:cellular heat acclimation"/>
    <property type="evidence" value="ECO:0000250"/>
    <property type="project" value="UniProtKB"/>
</dbReference>
<dbReference type="GO" id="GO:0006338">
    <property type="term" value="P:chromatin remodeling"/>
    <property type="evidence" value="ECO:0000266"/>
    <property type="project" value="ComplexPortal"/>
</dbReference>
<dbReference type="GO" id="GO:0006260">
    <property type="term" value="P:DNA replication"/>
    <property type="evidence" value="ECO:0007669"/>
    <property type="project" value="UniProtKB-KW"/>
</dbReference>
<dbReference type="GO" id="GO:0030308">
    <property type="term" value="P:negative regulation of cell growth"/>
    <property type="evidence" value="ECO:0000250"/>
    <property type="project" value="UniProtKB"/>
</dbReference>
<dbReference type="GO" id="GO:0030336">
    <property type="term" value="P:negative regulation of cell migration"/>
    <property type="evidence" value="ECO:0000303"/>
    <property type="project" value="ComplexPortal"/>
</dbReference>
<dbReference type="GO" id="GO:0045892">
    <property type="term" value="P:negative regulation of DNA-templated transcription"/>
    <property type="evidence" value="ECO:0000314"/>
    <property type="project" value="MGI"/>
</dbReference>
<dbReference type="GO" id="GO:1902455">
    <property type="term" value="P:negative regulation of stem cell population maintenance"/>
    <property type="evidence" value="ECO:0000303"/>
    <property type="project" value="ComplexPortal"/>
</dbReference>
<dbReference type="GO" id="GO:0000122">
    <property type="term" value="P:negative regulation of transcription by RNA polymerase II"/>
    <property type="evidence" value="ECO:0000314"/>
    <property type="project" value="MGI"/>
</dbReference>
<dbReference type="GO" id="GO:0030512">
    <property type="term" value="P:negative regulation of transforming growth factor beta receptor signaling pathway"/>
    <property type="evidence" value="ECO:0000303"/>
    <property type="project" value="ComplexPortal"/>
</dbReference>
<dbReference type="GO" id="GO:0045893">
    <property type="term" value="P:positive regulation of DNA-templated transcription"/>
    <property type="evidence" value="ECO:0000303"/>
    <property type="project" value="ComplexPortal"/>
</dbReference>
<dbReference type="GO" id="GO:1902459">
    <property type="term" value="P:positive regulation of stem cell population maintenance"/>
    <property type="evidence" value="ECO:0000303"/>
    <property type="project" value="ComplexPortal"/>
</dbReference>
<dbReference type="GO" id="GO:0042659">
    <property type="term" value="P:regulation of cell fate specification"/>
    <property type="evidence" value="ECO:0000303"/>
    <property type="project" value="ComplexPortal"/>
</dbReference>
<dbReference type="GO" id="GO:0006355">
    <property type="term" value="P:regulation of DNA-templated transcription"/>
    <property type="evidence" value="ECO:0000266"/>
    <property type="project" value="ComplexPortal"/>
</dbReference>
<dbReference type="GO" id="GO:2000736">
    <property type="term" value="P:regulation of stem cell differentiation"/>
    <property type="evidence" value="ECO:0000303"/>
    <property type="project" value="ComplexPortal"/>
</dbReference>
<dbReference type="GO" id="GO:0048545">
    <property type="term" value="P:response to steroid hormone"/>
    <property type="evidence" value="ECO:0007669"/>
    <property type="project" value="Ensembl"/>
</dbReference>
<dbReference type="FunFam" id="2.130.10.10:FF:000021">
    <property type="entry name" value="histone-binding protein RBBP4 isoform X1"/>
    <property type="match status" value="1"/>
</dbReference>
<dbReference type="Gene3D" id="2.130.10.10">
    <property type="entry name" value="YVTN repeat-like/Quinoprotein amine dehydrogenase"/>
    <property type="match status" value="1"/>
</dbReference>
<dbReference type="InterPro" id="IPR020472">
    <property type="entry name" value="G-protein_beta_WD-40_rep"/>
</dbReference>
<dbReference type="InterPro" id="IPR022052">
    <property type="entry name" value="Histone-bd_RBBP4-like_N"/>
</dbReference>
<dbReference type="InterPro" id="IPR015943">
    <property type="entry name" value="WD40/YVTN_repeat-like_dom_sf"/>
</dbReference>
<dbReference type="InterPro" id="IPR019775">
    <property type="entry name" value="WD40_repeat_CS"/>
</dbReference>
<dbReference type="InterPro" id="IPR036322">
    <property type="entry name" value="WD40_repeat_dom_sf"/>
</dbReference>
<dbReference type="InterPro" id="IPR001680">
    <property type="entry name" value="WD40_rpt"/>
</dbReference>
<dbReference type="InterPro" id="IPR050459">
    <property type="entry name" value="WD_repeat_RBAP46/RBAP48/MSI1"/>
</dbReference>
<dbReference type="PANTHER" id="PTHR22850">
    <property type="entry name" value="WD40 REPEAT FAMILY"/>
    <property type="match status" value="1"/>
</dbReference>
<dbReference type="Pfam" id="PF12265">
    <property type="entry name" value="CAF1C_H4-bd"/>
    <property type="match status" value="1"/>
</dbReference>
<dbReference type="Pfam" id="PF00400">
    <property type="entry name" value="WD40"/>
    <property type="match status" value="5"/>
</dbReference>
<dbReference type="PRINTS" id="PR00320">
    <property type="entry name" value="GPROTEINBRPT"/>
</dbReference>
<dbReference type="SMART" id="SM00320">
    <property type="entry name" value="WD40"/>
    <property type="match status" value="6"/>
</dbReference>
<dbReference type="SUPFAM" id="SSF50978">
    <property type="entry name" value="WD40 repeat-like"/>
    <property type="match status" value="1"/>
</dbReference>
<dbReference type="PROSITE" id="PS00678">
    <property type="entry name" value="WD_REPEATS_1"/>
    <property type="match status" value="3"/>
</dbReference>
<dbReference type="PROSITE" id="PS50082">
    <property type="entry name" value="WD_REPEATS_2"/>
    <property type="match status" value="5"/>
</dbReference>
<dbReference type="PROSITE" id="PS50294">
    <property type="entry name" value="WD_REPEATS_REGION"/>
    <property type="match status" value="1"/>
</dbReference>
<gene>
    <name type="primary">Rbbp7</name>
    <name type="synonym">Rbap46</name>
</gene>
<accession>Q60973</accession>
<accession>A2AFJ0</accession>
<accession>Q3UX20</accession>
<comment type="function">
    <text evidence="1">Core histone-binding subunit that may target chromatin remodeling factors, histone acetyltransferases and histone deacetylases to their histone substrates in a manner that is regulated by nucleosomal DNA. Component of several complexes which regulate chromatin metabolism. These include the type B histone acetyltransferase (HAT) complex, which is required for chromatin assembly following DNA replication; the core histone deacetylase (HDAC) complex, which promotes histone deacetylation and consequent transcriptional repression; the nucleosome remodeling and histone deacetylase complex (the NuRD complex), which promotes transcriptional repression by histone deacetylation and nucleosome remodeling; and the PRC2/EED-EZH2 complex, which promotes repression of homeotic genes during development; and the NURF (nucleosome remodeling factor) complex (By similarity).</text>
</comment>
<comment type="subunit">
    <text evidence="1 2 3 4 5 6">Binds directly to helix 1 of the histone fold of histone H4, a region that is not accessible when H4 is in chromatin (By similarity). Subunit of the type B histone acetyltransferase (HAT) complex, composed of RBBP7 and HAT1 (By similarity). Subunit of the core histone deacetylase (HDAC) complex, which is composed of HDAC1, HDAC2, RBBP4 and RBBP7. The core HDAC complex associates with SIN3A, ARID4B/SAP180, SAP18, SAP30, SAP130, SUDS3/SAP45 and possibly ARID4A/RBP1 and ING1 to form the SIN3 HDAC complex (By similarity). Component of the nucleosome remodeling and deacetylase (NuRD) repressor complex, composed of core proteins MTA1, MTA2, MTA3, RBBP4, RBBP7, HDAC1, HDAC2, MBD2, MBD3, and peripherally associated proteins CDK2AP1, CDK2AP2, GATAD2A, GATAD2B, CHD3, CHD4 and CHD5 (PubMed:27806305). The exact stoichiometry of the NuRD complex is unknown, and some subunits such as MBD2 and MBD3, GATAD2A and GATAD2B, and CHD3, CHD4 and CHD5 define mutually exclusive NuRD complexes (PubMed:27806305). The NuRD complex may interact with MBD3L1. The NuRD complex may interact with MBD3L2 (By similarity). Subunit of the PRC2/EED-EZH2 complex, which is composed of at least EED, EZH2, RBBP4, RBBP7 and SUZ12 (PubMed:20144788). The PRC2/EED-EZH2 complex may also associate with HDAC1. Component of the NURF-1 ISWI chromatin remodeling complex (also called the nucleosome-remodeling factor (NURF) complex) at least composed of SMARCA1, BPTF, RBBP4 and RBBP7. Within the complex interacts with SMARCA1. Component of the BPFT-SMARCA1 complex at least composed of SMARCA1, BPFT, RBBP4 and RBBP7; the complex is catalytically inactive and does not remodel chromatin. Within the complex interacts with SMARCA1. Interacts with BRCA1. Interacts with CDK2AP1. Interacts with CENPA. Interacts with CHD3. Interacts with CHD4. Interacts with CREBBP, and this interaction may be enhanced by the binding of phosphorylated CREB1 to CREBBP (By similarity). Interacts with HDAC7 (PubMed:10984530). Interacts with MTA1 (By similarity). Interacts with PWWP2B (PubMed:34180153). Interacts with RB1 (via viral protein-binding domain) (By similarity). Interacts with SUV39H1 (PubMed:11788710).</text>
</comment>
<comment type="subcellular location">
    <subcellularLocation>
        <location>Nucleus</location>
    </subcellularLocation>
</comment>
<comment type="tissue specificity">
    <text evidence="7">Higher levels in brain, thymus, lung, spleen, kidney, testis, and ovary/uterus; lower levels in heart, liver, and muscle.</text>
</comment>
<comment type="similarity">
    <text evidence="8">Belongs to the WD repeat RBAP46/RBAP48/MSI1 family.</text>
</comment>
<feature type="initiator methionine" description="Removed" evidence="9">
    <location>
        <position position="1"/>
    </location>
</feature>
<feature type="chain" id="PRO_0000051196" description="Histone-binding protein RBBP7">
    <location>
        <begin position="2"/>
        <end position="425"/>
    </location>
</feature>
<feature type="repeat" description="WD 1">
    <location>
        <begin position="47"/>
        <end position="122"/>
    </location>
</feature>
<feature type="repeat" description="WD 2">
    <location>
        <begin position="128"/>
        <end position="173"/>
    </location>
</feature>
<feature type="repeat" description="WD 3">
    <location>
        <begin position="181"/>
        <end position="217"/>
    </location>
</feature>
<feature type="repeat" description="WD 4">
    <location>
        <begin position="228"/>
        <end position="269"/>
    </location>
</feature>
<feature type="repeat" description="WD 5">
    <location>
        <begin position="275"/>
        <end position="312"/>
    </location>
</feature>
<feature type="repeat" description="WD 6">
    <location>
        <begin position="318"/>
        <end position="369"/>
    </location>
</feature>
<feature type="repeat" description="WD 7">
    <location>
        <begin position="376"/>
        <end position="403"/>
    </location>
</feature>
<feature type="modified residue" description="N-acetylalanine" evidence="9">
    <location>
        <position position="2"/>
    </location>
</feature>
<feature type="modified residue" description="Phosphoserine" evidence="1">
    <location>
        <position position="3"/>
    </location>
</feature>
<feature type="modified residue" description="N6-acetyllysine; alternate" evidence="9">
    <location>
        <position position="4"/>
    </location>
</feature>
<feature type="modified residue" description="Phosphothreonine" evidence="1">
    <location>
        <position position="10"/>
    </location>
</feature>
<feature type="modified residue" description="Phosphoserine" evidence="1">
    <location>
        <position position="95"/>
    </location>
</feature>
<feature type="modified residue" description="N6-acetyllysine" evidence="9">
    <location>
        <position position="119"/>
    </location>
</feature>
<feature type="modified residue" description="N6-acetyllysine; alternate" evidence="9">
    <location>
        <position position="159"/>
    </location>
</feature>
<feature type="modified residue" description="Phosphoserine" evidence="1">
    <location>
        <position position="354"/>
    </location>
</feature>
<feature type="cross-link" description="Glycyl lysine isopeptide (Lys-Gly) (interchain with G-Cter in SUMO2); alternate" evidence="1">
    <location>
        <position position="4"/>
    </location>
</feature>
<feature type="cross-link" description="Glycyl lysine isopeptide (Lys-Gly) (interchain with G-Cter in ubiquitin); alternate" evidence="1">
    <location>
        <position position="4"/>
    </location>
</feature>
<feature type="cross-link" description="Glycyl lysine isopeptide (Lys-Gly) (interchain with G-Cter in SUMO2)" evidence="1">
    <location>
        <position position="101"/>
    </location>
</feature>
<feature type="cross-link" description="Glycyl lysine isopeptide (Lys-Gly) (interchain with G-Cter in SUMO2)" evidence="1">
    <location>
        <position position="155"/>
    </location>
</feature>
<feature type="cross-link" description="Glycyl lysine isopeptide (Lys-Gly) (interchain with G-Cter in SUMO2); alternate" evidence="1">
    <location>
        <position position="159"/>
    </location>
</feature>
<proteinExistence type="evidence at protein level"/>
<organism>
    <name type="scientific">Mus musculus</name>
    <name type="common">Mouse</name>
    <dbReference type="NCBI Taxonomy" id="10090"/>
    <lineage>
        <taxon>Eukaryota</taxon>
        <taxon>Metazoa</taxon>
        <taxon>Chordata</taxon>
        <taxon>Craniata</taxon>
        <taxon>Vertebrata</taxon>
        <taxon>Euteleostomi</taxon>
        <taxon>Mammalia</taxon>
        <taxon>Eutheria</taxon>
        <taxon>Euarchontoglires</taxon>
        <taxon>Glires</taxon>
        <taxon>Rodentia</taxon>
        <taxon>Myomorpha</taxon>
        <taxon>Muroidea</taxon>
        <taxon>Muridae</taxon>
        <taxon>Murinae</taxon>
        <taxon>Mus</taxon>
        <taxon>Mus</taxon>
    </lineage>
</organism>
<evidence type="ECO:0000250" key="1">
    <source>
        <dbReference type="UniProtKB" id="Q16576"/>
    </source>
</evidence>
<evidence type="ECO:0000269" key="2">
    <source>
    </source>
</evidence>
<evidence type="ECO:0000269" key="3">
    <source>
    </source>
</evidence>
<evidence type="ECO:0000269" key="4">
    <source>
    </source>
</evidence>
<evidence type="ECO:0000269" key="5">
    <source>
    </source>
</evidence>
<evidence type="ECO:0000269" key="6">
    <source>
    </source>
</evidence>
<evidence type="ECO:0000269" key="7">
    <source>
    </source>
</evidence>
<evidence type="ECO:0000305" key="8"/>
<evidence type="ECO:0007744" key="9">
    <source>
    </source>
</evidence>
<reference key="1">
    <citation type="journal article" date="1995" name="J. Biol. Chem.">
        <title>Dual retinoblastoma-binding proteins with properties related to a negative regulator of ras in yeast.</title>
        <authorList>
            <person name="Qian Y.-W."/>
            <person name="Lee E.Y.-H.P."/>
        </authorList>
    </citation>
    <scope>NUCLEOTIDE SEQUENCE [MRNA]</scope>
    <scope>PROTEIN SEQUENCE OF 7-32 AND 133-155</scope>
    <scope>TISSUE SPECIFICITY</scope>
    <source>
        <tissue>Embryo</tissue>
    </source>
</reference>
<reference key="2">
    <citation type="journal article" date="2005" name="Science">
        <title>The transcriptional landscape of the mammalian genome.</title>
        <authorList>
            <person name="Carninci P."/>
            <person name="Kasukawa T."/>
            <person name="Katayama S."/>
            <person name="Gough J."/>
            <person name="Frith M.C."/>
            <person name="Maeda N."/>
            <person name="Oyama R."/>
            <person name="Ravasi T."/>
            <person name="Lenhard B."/>
            <person name="Wells C."/>
            <person name="Kodzius R."/>
            <person name="Shimokawa K."/>
            <person name="Bajic V.B."/>
            <person name="Brenner S.E."/>
            <person name="Batalov S."/>
            <person name="Forrest A.R."/>
            <person name="Zavolan M."/>
            <person name="Davis M.J."/>
            <person name="Wilming L.G."/>
            <person name="Aidinis V."/>
            <person name="Allen J.E."/>
            <person name="Ambesi-Impiombato A."/>
            <person name="Apweiler R."/>
            <person name="Aturaliya R.N."/>
            <person name="Bailey T.L."/>
            <person name="Bansal M."/>
            <person name="Baxter L."/>
            <person name="Beisel K.W."/>
            <person name="Bersano T."/>
            <person name="Bono H."/>
            <person name="Chalk A.M."/>
            <person name="Chiu K.P."/>
            <person name="Choudhary V."/>
            <person name="Christoffels A."/>
            <person name="Clutterbuck D.R."/>
            <person name="Crowe M.L."/>
            <person name="Dalla E."/>
            <person name="Dalrymple B.P."/>
            <person name="de Bono B."/>
            <person name="Della Gatta G."/>
            <person name="di Bernardo D."/>
            <person name="Down T."/>
            <person name="Engstrom P."/>
            <person name="Fagiolini M."/>
            <person name="Faulkner G."/>
            <person name="Fletcher C.F."/>
            <person name="Fukushima T."/>
            <person name="Furuno M."/>
            <person name="Futaki S."/>
            <person name="Gariboldi M."/>
            <person name="Georgii-Hemming P."/>
            <person name="Gingeras T.R."/>
            <person name="Gojobori T."/>
            <person name="Green R.E."/>
            <person name="Gustincich S."/>
            <person name="Harbers M."/>
            <person name="Hayashi Y."/>
            <person name="Hensch T.K."/>
            <person name="Hirokawa N."/>
            <person name="Hill D."/>
            <person name="Huminiecki L."/>
            <person name="Iacono M."/>
            <person name="Ikeo K."/>
            <person name="Iwama A."/>
            <person name="Ishikawa T."/>
            <person name="Jakt M."/>
            <person name="Kanapin A."/>
            <person name="Katoh M."/>
            <person name="Kawasawa Y."/>
            <person name="Kelso J."/>
            <person name="Kitamura H."/>
            <person name="Kitano H."/>
            <person name="Kollias G."/>
            <person name="Krishnan S.P."/>
            <person name="Kruger A."/>
            <person name="Kummerfeld S.K."/>
            <person name="Kurochkin I.V."/>
            <person name="Lareau L.F."/>
            <person name="Lazarevic D."/>
            <person name="Lipovich L."/>
            <person name="Liu J."/>
            <person name="Liuni S."/>
            <person name="McWilliam S."/>
            <person name="Madan Babu M."/>
            <person name="Madera M."/>
            <person name="Marchionni L."/>
            <person name="Matsuda H."/>
            <person name="Matsuzawa S."/>
            <person name="Miki H."/>
            <person name="Mignone F."/>
            <person name="Miyake S."/>
            <person name="Morris K."/>
            <person name="Mottagui-Tabar S."/>
            <person name="Mulder N."/>
            <person name="Nakano N."/>
            <person name="Nakauchi H."/>
            <person name="Ng P."/>
            <person name="Nilsson R."/>
            <person name="Nishiguchi S."/>
            <person name="Nishikawa S."/>
            <person name="Nori F."/>
            <person name="Ohara O."/>
            <person name="Okazaki Y."/>
            <person name="Orlando V."/>
            <person name="Pang K.C."/>
            <person name="Pavan W.J."/>
            <person name="Pavesi G."/>
            <person name="Pesole G."/>
            <person name="Petrovsky N."/>
            <person name="Piazza S."/>
            <person name="Reed J."/>
            <person name="Reid J.F."/>
            <person name="Ring B.Z."/>
            <person name="Ringwald M."/>
            <person name="Rost B."/>
            <person name="Ruan Y."/>
            <person name="Salzberg S.L."/>
            <person name="Sandelin A."/>
            <person name="Schneider C."/>
            <person name="Schoenbach C."/>
            <person name="Sekiguchi K."/>
            <person name="Semple C.A."/>
            <person name="Seno S."/>
            <person name="Sessa L."/>
            <person name="Sheng Y."/>
            <person name="Shibata Y."/>
            <person name="Shimada H."/>
            <person name="Shimada K."/>
            <person name="Silva D."/>
            <person name="Sinclair B."/>
            <person name="Sperling S."/>
            <person name="Stupka E."/>
            <person name="Sugiura K."/>
            <person name="Sultana R."/>
            <person name="Takenaka Y."/>
            <person name="Taki K."/>
            <person name="Tammoja K."/>
            <person name="Tan S.L."/>
            <person name="Tang S."/>
            <person name="Taylor M.S."/>
            <person name="Tegner J."/>
            <person name="Teichmann S.A."/>
            <person name="Ueda H.R."/>
            <person name="van Nimwegen E."/>
            <person name="Verardo R."/>
            <person name="Wei C.L."/>
            <person name="Yagi K."/>
            <person name="Yamanishi H."/>
            <person name="Zabarovsky E."/>
            <person name="Zhu S."/>
            <person name="Zimmer A."/>
            <person name="Hide W."/>
            <person name="Bult C."/>
            <person name="Grimmond S.M."/>
            <person name="Teasdale R.D."/>
            <person name="Liu E.T."/>
            <person name="Brusic V."/>
            <person name="Quackenbush J."/>
            <person name="Wahlestedt C."/>
            <person name="Mattick J.S."/>
            <person name="Hume D.A."/>
            <person name="Kai C."/>
            <person name="Sasaki D."/>
            <person name="Tomaru Y."/>
            <person name="Fukuda S."/>
            <person name="Kanamori-Katayama M."/>
            <person name="Suzuki M."/>
            <person name="Aoki J."/>
            <person name="Arakawa T."/>
            <person name="Iida J."/>
            <person name="Imamura K."/>
            <person name="Itoh M."/>
            <person name="Kato T."/>
            <person name="Kawaji H."/>
            <person name="Kawagashira N."/>
            <person name="Kawashima T."/>
            <person name="Kojima M."/>
            <person name="Kondo S."/>
            <person name="Konno H."/>
            <person name="Nakano K."/>
            <person name="Ninomiya N."/>
            <person name="Nishio T."/>
            <person name="Okada M."/>
            <person name="Plessy C."/>
            <person name="Shibata K."/>
            <person name="Shiraki T."/>
            <person name="Suzuki S."/>
            <person name="Tagami M."/>
            <person name="Waki K."/>
            <person name="Watahiki A."/>
            <person name="Okamura-Oho Y."/>
            <person name="Suzuki H."/>
            <person name="Kawai J."/>
            <person name="Hayashizaki Y."/>
        </authorList>
    </citation>
    <scope>NUCLEOTIDE SEQUENCE [LARGE SCALE MRNA]</scope>
    <source>
        <strain>C57BL/6J</strain>
        <strain>NOD</strain>
        <tissue>Egg</tissue>
        <tissue>Heart</tissue>
        <tissue>Kidney</tissue>
        <tissue>Liver</tissue>
        <tissue>Placenta</tissue>
        <tissue>Sympathetic ganglion</tissue>
        <tissue>Thymus</tissue>
    </source>
</reference>
<reference key="3">
    <citation type="journal article" date="2009" name="PLoS Biol.">
        <title>Lineage-specific biology revealed by a finished genome assembly of the mouse.</title>
        <authorList>
            <person name="Church D.M."/>
            <person name="Goodstadt L."/>
            <person name="Hillier L.W."/>
            <person name="Zody M.C."/>
            <person name="Goldstein S."/>
            <person name="She X."/>
            <person name="Bult C.J."/>
            <person name="Agarwala R."/>
            <person name="Cherry J.L."/>
            <person name="DiCuccio M."/>
            <person name="Hlavina W."/>
            <person name="Kapustin Y."/>
            <person name="Meric P."/>
            <person name="Maglott D."/>
            <person name="Birtle Z."/>
            <person name="Marques A.C."/>
            <person name="Graves T."/>
            <person name="Zhou S."/>
            <person name="Teague B."/>
            <person name="Potamousis K."/>
            <person name="Churas C."/>
            <person name="Place M."/>
            <person name="Herschleb J."/>
            <person name="Runnheim R."/>
            <person name="Forrest D."/>
            <person name="Amos-Landgraf J."/>
            <person name="Schwartz D.C."/>
            <person name="Cheng Z."/>
            <person name="Lindblad-Toh K."/>
            <person name="Eichler E.E."/>
            <person name="Ponting C.P."/>
        </authorList>
    </citation>
    <scope>NUCLEOTIDE SEQUENCE [LARGE SCALE GENOMIC DNA]</scope>
    <source>
        <strain>C57BL/6J</strain>
    </source>
</reference>
<reference key="4">
    <citation type="journal article" date="2004" name="Genome Res.">
        <title>The status, quality, and expansion of the NIH full-length cDNA project: the Mammalian Gene Collection (MGC).</title>
        <authorList>
            <consortium name="The MGC Project Team"/>
        </authorList>
    </citation>
    <scope>NUCLEOTIDE SEQUENCE [LARGE SCALE MRNA]</scope>
    <source>
        <tissue>Mammary tumor</tissue>
    </source>
</reference>
<reference key="5">
    <citation type="journal article" date="2002" name="Nucleic Acids Res.">
        <title>Functional and physical interaction between the histone methyl transferase Suv39H1 and histone deacetylases.</title>
        <authorList>
            <person name="Vaute O."/>
            <person name="Nicolas E."/>
            <person name="Vandel L."/>
            <person name="Trouche D."/>
        </authorList>
    </citation>
    <scope>INTERACTION WITH SUV39H1</scope>
</reference>
<reference key="6">
    <citation type="journal article" date="2000" name="Proc. Natl. Acad. Sci. U.S.A.">
        <title>Identification of a nuclear domain with deacetylase activity.</title>
        <authorList>
            <person name="Downes M."/>
            <person name="Ordentlich P."/>
            <person name="Kao H.-Y."/>
            <person name="Alvarez J.G.A."/>
            <person name="Evans R.M."/>
        </authorList>
    </citation>
    <scope>INTERACTION WITH HDAC7</scope>
</reference>
<reference key="7">
    <citation type="journal article" date="2010" name="Cell">
        <title>A tissue-specific atlas of mouse protein phosphorylation and expression.</title>
        <authorList>
            <person name="Huttlin E.L."/>
            <person name="Jedrychowski M.P."/>
            <person name="Elias J.E."/>
            <person name="Goswami T."/>
            <person name="Rad R."/>
            <person name="Beausoleil S.A."/>
            <person name="Villen J."/>
            <person name="Haas W."/>
            <person name="Sowa M.E."/>
            <person name="Gygi S.P."/>
        </authorList>
    </citation>
    <scope>IDENTIFICATION BY MASS SPECTROMETRY [LARGE SCALE ANALYSIS]</scope>
    <source>
        <tissue>Brain</tissue>
        <tissue>Heart</tissue>
        <tissue>Kidney</tissue>
        <tissue>Liver</tissue>
        <tissue>Lung</tissue>
        <tissue>Pancreas</tissue>
        <tissue>Spleen</tissue>
        <tissue>Testis</tissue>
    </source>
</reference>
<reference key="8">
    <citation type="journal article" date="2010" name="Cell Stem Cell">
        <title>Polycomb-like 2 associates with PRC2 and regulates transcriptional networks during mouse embryonic stem cell self-renewal and differentiation.</title>
        <authorList>
            <person name="Walker E."/>
            <person name="Chang W.Y."/>
            <person name="Hunkapiller J."/>
            <person name="Cagney G."/>
            <person name="Garcha K."/>
            <person name="Torchia J."/>
            <person name="Krogan N.J."/>
            <person name="Reiter J.F."/>
            <person name="Stanford W.L."/>
        </authorList>
    </citation>
    <scope>IDENTIFICATION IN THE PRC2 COMPLEX</scope>
</reference>
<reference key="9">
    <citation type="journal article" date="2013" name="Mol. Cell">
        <title>SIRT5-mediated lysine desuccinylation impacts diverse metabolic pathways.</title>
        <authorList>
            <person name="Park J."/>
            <person name="Chen Y."/>
            <person name="Tishkoff D.X."/>
            <person name="Peng C."/>
            <person name="Tan M."/>
            <person name="Dai L."/>
            <person name="Xie Z."/>
            <person name="Zhang Y."/>
            <person name="Zwaans B.M."/>
            <person name="Skinner M.E."/>
            <person name="Lombard D.B."/>
            <person name="Zhao Y."/>
        </authorList>
    </citation>
    <scope>ACETYLATION [LARGE SCALE ANALYSIS] AT ALA-2; LYS-4; LYS-119 AND LYS-159</scope>
    <scope>CLEAVAGE OF INITIATOR METHIONINE [LARGE SCALE ANALYSIS]</scope>
    <scope>IDENTIFICATION BY MASS SPECTROMETRY [LARGE SCALE ANALYSIS]</scope>
    <source>
        <tissue>Embryonic fibroblast</tissue>
    </source>
</reference>
<reference key="10">
    <citation type="journal article" date="2016" name="Cell Rep.">
        <title>A Functional Switch of NuRD Chromatin Remodeling Complex Subunits Regulates Mouse Cortical Development.</title>
        <authorList>
            <person name="Nitarska J."/>
            <person name="Smith J.G."/>
            <person name="Sherlock W.T."/>
            <person name="Hillege M.M."/>
            <person name="Nott A."/>
            <person name="Barshop W.D."/>
            <person name="Vashisht A.A."/>
            <person name="Wohlschlegel J.A."/>
            <person name="Mitter R."/>
            <person name="Riccio A."/>
        </authorList>
    </citation>
    <scope>IDENTIFICATION IN THE NURD COMPLEX</scope>
    <scope>IDENTIFICATION BY MASS SPECTROMETRY</scope>
</reference>
<reference key="11">
    <citation type="journal article" date="2021" name="Adv. Sci.">
        <title>PWWP2B Fine-Tunes Adipose Thermogenesis by Stabilizing HDACs in a NuRD Subcomplex.</title>
        <authorList>
            <person name="Yan L."/>
            <person name="Jin W."/>
            <person name="Zhao Q."/>
            <person name="Cui X."/>
            <person name="Shi T."/>
            <person name="Xu Y."/>
            <person name="Li F."/>
            <person name="Jin W."/>
            <person name="Zhang Z."/>
            <person name="Zhang Z."/>
            <person name="Tang Q.Q."/>
            <person name="Pan D."/>
        </authorList>
    </citation>
    <scope>INTERACTION WITH PWWP2B</scope>
</reference>
<keyword id="KW-0007">Acetylation</keyword>
<keyword id="KW-0143">Chaperone</keyword>
<keyword id="KW-0156">Chromatin regulator</keyword>
<keyword id="KW-0903">Direct protein sequencing</keyword>
<keyword id="KW-0235">DNA replication</keyword>
<keyword id="KW-1017">Isopeptide bond</keyword>
<keyword id="KW-0539">Nucleus</keyword>
<keyword id="KW-0597">Phosphoprotein</keyword>
<keyword id="KW-1185">Reference proteome</keyword>
<keyword id="KW-0677">Repeat</keyword>
<keyword id="KW-0678">Repressor</keyword>
<keyword id="KW-0804">Transcription</keyword>
<keyword id="KW-0805">Transcription regulation</keyword>
<keyword id="KW-0832">Ubl conjugation</keyword>
<keyword id="KW-0853">WD repeat</keyword>